<organism>
    <name type="scientific">Escherichia coli (strain K12)</name>
    <dbReference type="NCBI Taxonomy" id="83333"/>
    <lineage>
        <taxon>Bacteria</taxon>
        <taxon>Pseudomonadati</taxon>
        <taxon>Pseudomonadota</taxon>
        <taxon>Gammaproteobacteria</taxon>
        <taxon>Enterobacterales</taxon>
        <taxon>Enterobacteriaceae</taxon>
        <taxon>Escherichia</taxon>
    </lineage>
</organism>
<protein>
    <recommendedName>
        <fullName>Xaa-Pro dipeptidase</fullName>
        <shortName>X-Pro dipeptidase</shortName>
        <ecNumber>3.4.13.9</ecNumber>
    </recommendedName>
    <alternativeName>
        <fullName>Imidodipeptidase</fullName>
    </alternativeName>
    <alternativeName>
        <fullName>Proline dipeptidase</fullName>
        <shortName>Prolidase</shortName>
    </alternativeName>
</protein>
<reference key="1">
    <citation type="journal article" date="1990" name="Nucleic Acids Res.">
        <title>Nucleotide sequence between the fadB gene and the rrnA operon from Escherichia coli.</title>
        <authorList>
            <person name="Nakahigashi K."/>
            <person name="Inokuchi H."/>
        </authorList>
    </citation>
    <scope>NUCLEOTIDE SEQUENCE [GENOMIC DNA]</scope>
    <source>
        <strain>K12 / W3110 / ATCC 27325 / DSM 5911</strain>
    </source>
</reference>
<reference key="2">
    <citation type="journal article" date="1992" name="Science">
        <title>Analysis of the Escherichia coli genome: DNA sequence of the region from 84.5 to 86.5 minutes.</title>
        <authorList>
            <person name="Daniels D.L."/>
            <person name="Plunkett G. III"/>
            <person name="Burland V.D."/>
            <person name="Blattner F.R."/>
        </authorList>
    </citation>
    <scope>NUCLEOTIDE SEQUENCE [LARGE SCALE GENOMIC DNA]</scope>
    <source>
        <strain>K12 / MG1655 / ATCC 47076</strain>
    </source>
</reference>
<reference key="3">
    <citation type="journal article" date="1997" name="Science">
        <title>The complete genome sequence of Escherichia coli K-12.</title>
        <authorList>
            <person name="Blattner F.R."/>
            <person name="Plunkett G. III"/>
            <person name="Bloch C.A."/>
            <person name="Perna N.T."/>
            <person name="Burland V."/>
            <person name="Riley M."/>
            <person name="Collado-Vides J."/>
            <person name="Glasner J.D."/>
            <person name="Rode C.K."/>
            <person name="Mayhew G.F."/>
            <person name="Gregor J."/>
            <person name="Davis N.W."/>
            <person name="Kirkpatrick H.A."/>
            <person name="Goeden M.A."/>
            <person name="Rose D.J."/>
            <person name="Mau B."/>
            <person name="Shao Y."/>
        </authorList>
    </citation>
    <scope>NUCLEOTIDE SEQUENCE [LARGE SCALE GENOMIC DNA]</scope>
    <source>
        <strain>K12 / MG1655 / ATCC 47076</strain>
    </source>
</reference>
<reference key="4">
    <citation type="journal article" date="2006" name="Mol. Syst. Biol.">
        <title>Highly accurate genome sequences of Escherichia coli K-12 strains MG1655 and W3110.</title>
        <authorList>
            <person name="Hayashi K."/>
            <person name="Morooka N."/>
            <person name="Yamamoto Y."/>
            <person name="Fujita K."/>
            <person name="Isono K."/>
            <person name="Choi S."/>
            <person name="Ohtsubo E."/>
            <person name="Baba T."/>
            <person name="Wanner B.L."/>
            <person name="Mori H."/>
            <person name="Horiuchi T."/>
        </authorList>
    </citation>
    <scope>NUCLEOTIDE SEQUENCE [LARGE SCALE GENOMIC DNA]</scope>
    <source>
        <strain>K12 / W3110 / ATCC 27325 / DSM 5911</strain>
    </source>
</reference>
<reference key="5">
    <citation type="submission" date="1990-05" db="EMBL/GenBank/DDBJ databases">
        <authorList>
            <person name="Nakahigashi K."/>
        </authorList>
    </citation>
    <scope>NUCLEOTIDE SEQUENCE [GENOMIC DNA] OF 1-438</scope>
    <source>
        <strain>K12 / W3110 / ATCC 27325 / DSM 5911</strain>
    </source>
</reference>
<reference key="6">
    <citation type="journal article" date="2004" name="Arch. Biochem. Biophys.">
        <title>Catalytic properties of the PepQ prolidase from Escherichia coli.</title>
        <authorList>
            <person name="Park M.-S."/>
            <person name="Hill C.M."/>
            <person name="Li Y."/>
            <person name="Hardy R.K."/>
            <person name="Khanna H."/>
            <person name="Khang Y.-H."/>
            <person name="Raushel F.M."/>
        </authorList>
    </citation>
    <scope>PROTEIN SEQUENCE OF 1-5</scope>
    <scope>FUNCTION</scope>
    <scope>CHARACTERIZATION</scope>
    <scope>SUBSTRATE SPECIFICITY</scope>
    <scope>KINETIC PARAMETERS</scope>
</reference>
<gene>
    <name type="primary">pepQ</name>
    <name type="ordered locus">b3847</name>
    <name type="ordered locus">JW3823</name>
</gene>
<keyword id="KW-0002">3D-structure</keyword>
<keyword id="KW-0224">Dipeptidase</keyword>
<keyword id="KW-0903">Direct protein sequencing</keyword>
<keyword id="KW-0378">Hydrolase</keyword>
<keyword id="KW-0464">Manganese</keyword>
<keyword id="KW-0479">Metal-binding</keyword>
<keyword id="KW-0482">Metalloprotease</keyword>
<keyword id="KW-0645">Protease</keyword>
<keyword id="KW-1185">Reference proteome</keyword>
<sequence>MESLASLYKNHIATLQERTRDALARFKLDALLIHSGELFNVFLDDHPYPFKVNPQFKAWVPVTQVPNCWLLVDGVNKPKLWFYLPVDYWHNVEPLPTSFWTEDVEVIALPKADGIGSLLPAARGNIGYIGPVPERALQLGIEASNINPKGVIDYLHYYRSFKTEYELACMREAQKMAVNGHRAAEEAFRSGMSEFDINIAYLTATGHRDTDVPYSNIVALNEHAAVLHYTKLDHQAPEEMRSFLLDAGAEYNGYAADLTRTWSAKSDNDYAQLVKDVNDEQLALIATMKAGVSYVDYHIQFHQRIAKLLRKHQIITDMSEEAMVENDLTGPFMPHGIGHPLGLQVHDVAGFMQDDSGTHLAAPAKYPYLRCTRILQPGMVLTIEPGIYFIESLLAPWREGQFSKHFNWQKIEALKPFGGIRIEDNVVIHENNVENMTRDLKLA</sequence>
<evidence type="ECO:0000250" key="1"/>
<evidence type="ECO:0000269" key="2">
    <source>
    </source>
</evidence>
<evidence type="ECO:0000305" key="3"/>
<evidence type="ECO:0007829" key="4">
    <source>
        <dbReference type="PDB" id="4QR8"/>
    </source>
</evidence>
<comment type="function">
    <text evidence="2">Splits dipeptides with a prolyl residue in the C-terminal position and a polar or nonpolar amino acid at the N-terminal position. With much lower efficiency, also catalyzes the stereoselective hydrolysis of a wide variety of organophosphate triesters and organophosphonate diesters. Is able to hydrolyze the organophosphorus insecticide paraoxon and the p-nitrophenyl analogs of the nerve agents GB (sarin), GD (soman), GF, Vx and rVX.</text>
</comment>
<comment type="catalytic activity">
    <reaction>
        <text>Xaa-L-Pro dipeptide + H2O = an L-alpha-amino acid + L-proline</text>
        <dbReference type="Rhea" id="RHEA:76407"/>
        <dbReference type="ChEBI" id="CHEBI:15377"/>
        <dbReference type="ChEBI" id="CHEBI:59869"/>
        <dbReference type="ChEBI" id="CHEBI:60039"/>
        <dbReference type="ChEBI" id="CHEBI:195196"/>
        <dbReference type="EC" id="3.4.13.9"/>
    </reaction>
</comment>
<comment type="cofactor">
    <cofactor evidence="1">
        <name>Mn(2+)</name>
        <dbReference type="ChEBI" id="CHEBI:29035"/>
    </cofactor>
    <text evidence="1">Binds 2 manganese ions per subunit.</text>
</comment>
<comment type="biophysicochemical properties">
    <kinetics>
        <KM evidence="2">1.9 mM for Ala-Pro</KM>
        <KM evidence="2">0.1 mM for Arg-Pro</KM>
        <KM evidence="2">1.4 mM for Gly-Pro</KM>
        <KM evidence="2">0.15 mM for His-Pro</KM>
        <KM evidence="2">0.1 mM for Ile-Pro</KM>
        <KM evidence="2">1 mM for Leu-Pro</KM>
        <KM evidence="2">0.27 mM for Lys-Pro</KM>
        <KM evidence="2">0.13 mM for Met-Pro</KM>
        <KM evidence="2">0.43 mM for Phe-Pro</KM>
        <KM evidence="2">0.31 mM for Pro-Pro</KM>
        <KM evidence="2">0.46 mM for Ser-Pro</KM>
        <KM evidence="2">0.16 mM for Tyr-Pro</KM>
        <KM evidence="2">0.4 mM for Val-Pro</KM>
        <KM evidence="2">38 mM for diisopropylfluorophosphate</KM>
        <text>Among the dipeptides described above, the highest catalytic efficiency is observed with dipeptides containing charge residues.</text>
    </kinetics>
</comment>
<comment type="interaction">
    <interactant intactId="EBI-552580">
        <id>P21165</id>
    </interactant>
    <interactant intactId="EBI-558026">
        <id>P33643</id>
        <label>rluD</label>
    </interactant>
    <organismsDiffer>false</organismsDiffer>
    <experiments>2</experiments>
</comment>
<comment type="biotechnology">
    <text>Can be utilized for the kinetic resolution of racemic phosphate esters.</text>
</comment>
<comment type="miscellaneous">
    <text>Has a stereoselective preference for isomers with R-configuration at the phosphorous center of organophosphonate diesters and with S-configuration in organophosphate triesters.</text>
</comment>
<comment type="similarity">
    <text evidence="3">Belongs to the peptidase M24B family. Bacterial-type prolidase subfamily.</text>
</comment>
<comment type="sequence caution" evidence="3">
    <conflict type="frameshift">
        <sequence resource="EMBL-CDS" id="CAA38501"/>
    </conflict>
    <text>The resulting sequence is much longer and includes the sequence of yigZ.</text>
</comment>
<feature type="chain" id="PRO_0000185089" description="Xaa-Pro dipeptidase">
    <location>
        <begin position="1"/>
        <end position="443"/>
    </location>
</feature>
<feature type="binding site" evidence="1">
    <location>
        <position position="246"/>
    </location>
    <ligand>
        <name>Mn(2+)</name>
        <dbReference type="ChEBI" id="CHEBI:29035"/>
        <label>2</label>
    </ligand>
</feature>
<feature type="binding site" evidence="1">
    <location>
        <position position="257"/>
    </location>
    <ligand>
        <name>Mn(2+)</name>
        <dbReference type="ChEBI" id="CHEBI:29035"/>
        <label>1</label>
    </ligand>
</feature>
<feature type="binding site" evidence="1">
    <location>
        <position position="257"/>
    </location>
    <ligand>
        <name>Mn(2+)</name>
        <dbReference type="ChEBI" id="CHEBI:29035"/>
        <label>2</label>
    </ligand>
</feature>
<feature type="binding site" evidence="1">
    <location>
        <position position="339"/>
    </location>
    <ligand>
        <name>Mn(2+)</name>
        <dbReference type="ChEBI" id="CHEBI:29035"/>
        <label>1</label>
    </ligand>
</feature>
<feature type="binding site" evidence="1">
    <location>
        <position position="384"/>
    </location>
    <ligand>
        <name>Mn(2+)</name>
        <dbReference type="ChEBI" id="CHEBI:29035"/>
        <label>1</label>
    </ligand>
</feature>
<feature type="binding site" evidence="1">
    <location>
        <position position="423"/>
    </location>
    <ligand>
        <name>Mn(2+)</name>
        <dbReference type="ChEBI" id="CHEBI:29035"/>
        <label>1</label>
    </ligand>
</feature>
<feature type="binding site" evidence="1">
    <location>
        <position position="423"/>
    </location>
    <ligand>
        <name>Mn(2+)</name>
        <dbReference type="ChEBI" id="CHEBI:29035"/>
        <label>2</label>
    </ligand>
</feature>
<feature type="helix" evidence="4">
    <location>
        <begin position="4"/>
        <end position="26"/>
    </location>
</feature>
<feature type="strand" evidence="4">
    <location>
        <begin position="29"/>
        <end position="34"/>
    </location>
</feature>
<feature type="helix" evidence="4">
    <location>
        <begin position="54"/>
        <end position="57"/>
    </location>
</feature>
<feature type="strand" evidence="4">
    <location>
        <begin position="69"/>
        <end position="72"/>
    </location>
</feature>
<feature type="strand" evidence="4">
    <location>
        <begin position="74"/>
        <end position="76"/>
    </location>
</feature>
<feature type="strand" evidence="4">
    <location>
        <begin position="79"/>
        <end position="83"/>
    </location>
</feature>
<feature type="strand" evidence="4">
    <location>
        <begin position="88"/>
        <end position="90"/>
    </location>
</feature>
<feature type="helix" evidence="4">
    <location>
        <begin position="99"/>
        <end position="102"/>
    </location>
</feature>
<feature type="strand" evidence="4">
    <location>
        <begin position="104"/>
        <end position="111"/>
    </location>
</feature>
<feature type="helix" evidence="4">
    <location>
        <begin position="112"/>
        <end position="114"/>
    </location>
</feature>
<feature type="turn" evidence="4">
    <location>
        <begin position="116"/>
        <end position="118"/>
    </location>
</feature>
<feature type="strand" evidence="4">
    <location>
        <begin position="126"/>
        <end position="131"/>
    </location>
</feature>
<feature type="helix" evidence="4">
    <location>
        <begin position="133"/>
        <end position="138"/>
    </location>
</feature>
<feature type="helix" evidence="4">
    <location>
        <begin position="143"/>
        <end position="145"/>
    </location>
</feature>
<feature type="helix" evidence="4">
    <location>
        <begin position="149"/>
        <end position="159"/>
    </location>
</feature>
<feature type="helix" evidence="4">
    <location>
        <begin position="164"/>
        <end position="189"/>
    </location>
</feature>
<feature type="helix" evidence="4">
    <location>
        <begin position="194"/>
        <end position="205"/>
    </location>
</feature>
<feature type="turn" evidence="4">
    <location>
        <begin position="209"/>
        <end position="211"/>
    </location>
</feature>
<feature type="strand" evidence="4">
    <location>
        <begin position="212"/>
        <end position="214"/>
    </location>
</feature>
<feature type="strand" evidence="4">
    <location>
        <begin position="217"/>
        <end position="220"/>
    </location>
</feature>
<feature type="helix" evidence="4">
    <location>
        <begin position="221"/>
        <end position="225"/>
    </location>
</feature>
<feature type="strand" evidence="4">
    <location>
        <begin position="242"/>
        <end position="251"/>
    </location>
</feature>
<feature type="strand" evidence="4">
    <location>
        <begin position="254"/>
        <end position="264"/>
    </location>
</feature>
<feature type="strand" evidence="4">
    <location>
        <begin position="266"/>
        <end position="268"/>
    </location>
</feature>
<feature type="helix" evidence="4">
    <location>
        <begin position="269"/>
        <end position="287"/>
    </location>
</feature>
<feature type="helix" evidence="4">
    <location>
        <begin position="294"/>
        <end position="311"/>
    </location>
</feature>
<feature type="helix" evidence="4">
    <location>
        <begin position="320"/>
        <end position="325"/>
    </location>
</feature>
<feature type="turn" evidence="4">
    <location>
        <begin position="326"/>
        <end position="329"/>
    </location>
</feature>
<feature type="helix" evidence="4">
    <location>
        <begin position="330"/>
        <end position="332"/>
    </location>
</feature>
<feature type="strand" evidence="4">
    <location>
        <begin position="342"/>
        <end position="346"/>
    </location>
</feature>
<feature type="strand" evidence="4">
    <location>
        <begin position="350"/>
        <end position="352"/>
    </location>
</feature>
<feature type="strand" evidence="4">
    <location>
        <begin position="380"/>
        <end position="383"/>
    </location>
</feature>
<feature type="strand" evidence="4">
    <location>
        <begin position="386"/>
        <end position="388"/>
    </location>
</feature>
<feature type="helix" evidence="4">
    <location>
        <begin position="391"/>
        <end position="399"/>
    </location>
</feature>
<feature type="helix" evidence="4">
    <location>
        <begin position="403"/>
        <end position="405"/>
    </location>
</feature>
<feature type="helix" evidence="4">
    <location>
        <begin position="408"/>
        <end position="414"/>
    </location>
</feature>
<feature type="helix" evidence="4">
    <location>
        <begin position="415"/>
        <end position="417"/>
    </location>
</feature>
<feature type="strand" evidence="4">
    <location>
        <begin position="419"/>
        <end position="421"/>
    </location>
</feature>
<feature type="strand" evidence="4">
    <location>
        <begin position="423"/>
        <end position="428"/>
    </location>
</feature>
<feature type="strand" evidence="4">
    <location>
        <begin position="433"/>
        <end position="435"/>
    </location>
</feature>
<feature type="helix" evidence="4">
    <location>
        <begin position="436"/>
        <end position="439"/>
    </location>
</feature>
<dbReference type="EC" id="3.4.13.9"/>
<dbReference type="EMBL" id="X54687">
    <property type="protein sequence ID" value="CAA38501.1"/>
    <property type="status" value="ALT_FRAME"/>
    <property type="molecule type" value="Genomic_DNA"/>
</dbReference>
<dbReference type="EMBL" id="M87049">
    <property type="protein sequence ID" value="AAA67644.1"/>
    <property type="molecule type" value="Genomic_DNA"/>
</dbReference>
<dbReference type="EMBL" id="U00096">
    <property type="protein sequence ID" value="AAC76850.1"/>
    <property type="molecule type" value="Genomic_DNA"/>
</dbReference>
<dbReference type="EMBL" id="AP009048">
    <property type="protein sequence ID" value="BAE77456.1"/>
    <property type="molecule type" value="Genomic_DNA"/>
</dbReference>
<dbReference type="EMBL" id="X52837">
    <property type="status" value="NOT_ANNOTATED_CDS"/>
    <property type="molecule type" value="Genomic_DNA"/>
</dbReference>
<dbReference type="PIR" id="H65189">
    <property type="entry name" value="H65189"/>
</dbReference>
<dbReference type="RefSeq" id="NP_418289.1">
    <property type="nucleotide sequence ID" value="NC_000913.3"/>
</dbReference>
<dbReference type="RefSeq" id="WP_000444561.1">
    <property type="nucleotide sequence ID" value="NZ_STEB01000021.1"/>
</dbReference>
<dbReference type="PDB" id="4QR8">
    <property type="method" value="X-ray"/>
    <property type="resolution" value="2.00 A"/>
    <property type="chains" value="A/B=1-443"/>
</dbReference>
<dbReference type="PDBsum" id="4QR8"/>
<dbReference type="SMR" id="P21165"/>
<dbReference type="BioGRID" id="4261838">
    <property type="interactions" value="34"/>
</dbReference>
<dbReference type="DIP" id="DIP-10460N"/>
<dbReference type="FunCoup" id="P21165">
    <property type="interactions" value="17"/>
</dbReference>
<dbReference type="IntAct" id="P21165">
    <property type="interactions" value="4"/>
</dbReference>
<dbReference type="STRING" id="511145.b3847"/>
<dbReference type="MEROPS" id="M24.003"/>
<dbReference type="jPOST" id="P21165"/>
<dbReference type="PaxDb" id="511145-b3847"/>
<dbReference type="EnsemblBacteria" id="AAC76850">
    <property type="protein sequence ID" value="AAC76850"/>
    <property type="gene ID" value="b3847"/>
</dbReference>
<dbReference type="GeneID" id="86861950"/>
<dbReference type="GeneID" id="948335"/>
<dbReference type="KEGG" id="ecj:JW3823"/>
<dbReference type="KEGG" id="eco:b3847"/>
<dbReference type="KEGG" id="ecoc:C3026_20800"/>
<dbReference type="PATRIC" id="fig|1411691.4.peg.2863"/>
<dbReference type="EchoBASE" id="EB0692"/>
<dbReference type="eggNOG" id="COG0006">
    <property type="taxonomic scope" value="Bacteria"/>
</dbReference>
<dbReference type="HOGENOM" id="CLU_050675_0_0_6"/>
<dbReference type="InParanoid" id="P21165"/>
<dbReference type="OMA" id="DFWHKVA"/>
<dbReference type="OrthoDB" id="9806388at2"/>
<dbReference type="PhylomeDB" id="P21165"/>
<dbReference type="BioCyc" id="EcoCyc:EG10698-MONOMER"/>
<dbReference type="BioCyc" id="MetaCyc:EG10698-MONOMER"/>
<dbReference type="EvolutionaryTrace" id="P21165"/>
<dbReference type="PRO" id="PR:P21165"/>
<dbReference type="Proteomes" id="UP000000625">
    <property type="component" value="Chromosome"/>
</dbReference>
<dbReference type="GO" id="GO:0005829">
    <property type="term" value="C:cytosol"/>
    <property type="evidence" value="ECO:0000314"/>
    <property type="project" value="EcoCyc"/>
</dbReference>
<dbReference type="GO" id="GO:0004177">
    <property type="term" value="F:aminopeptidase activity"/>
    <property type="evidence" value="ECO:0000318"/>
    <property type="project" value="GO_Central"/>
</dbReference>
<dbReference type="GO" id="GO:0016805">
    <property type="term" value="F:dipeptidase activity"/>
    <property type="evidence" value="ECO:0000314"/>
    <property type="project" value="EcoCyc"/>
</dbReference>
<dbReference type="GO" id="GO:0030145">
    <property type="term" value="F:manganese ion binding"/>
    <property type="evidence" value="ECO:0000314"/>
    <property type="project" value="EcoCyc"/>
</dbReference>
<dbReference type="GO" id="GO:0070573">
    <property type="term" value="F:metallodipeptidase activity"/>
    <property type="evidence" value="ECO:0000314"/>
    <property type="project" value="EcoCyc"/>
</dbReference>
<dbReference type="GO" id="GO:0016795">
    <property type="term" value="F:phosphoric triester hydrolase activity"/>
    <property type="evidence" value="ECO:0007669"/>
    <property type="project" value="InterPro"/>
</dbReference>
<dbReference type="GO" id="GO:0102009">
    <property type="term" value="F:proline dipeptidase activity"/>
    <property type="evidence" value="ECO:0007669"/>
    <property type="project" value="UniProtKB-EC"/>
</dbReference>
<dbReference type="GO" id="GO:0042803">
    <property type="term" value="F:protein homodimerization activity"/>
    <property type="evidence" value="ECO:0000314"/>
    <property type="project" value="EcoCyc"/>
</dbReference>
<dbReference type="GO" id="GO:0043171">
    <property type="term" value="P:peptide catabolic process"/>
    <property type="evidence" value="ECO:0000316"/>
    <property type="project" value="EcoliWiki"/>
</dbReference>
<dbReference type="GO" id="GO:0006508">
    <property type="term" value="P:proteolysis"/>
    <property type="evidence" value="ECO:0000318"/>
    <property type="project" value="GO_Central"/>
</dbReference>
<dbReference type="CDD" id="cd01087">
    <property type="entry name" value="Prolidase"/>
    <property type="match status" value="1"/>
</dbReference>
<dbReference type="FunFam" id="3.40.350.10:FF:000002">
    <property type="entry name" value="Xaa-Pro dipeptidase"/>
    <property type="match status" value="1"/>
</dbReference>
<dbReference type="FunFam" id="3.90.230.10:FF:000006">
    <property type="entry name" value="Xaa-Pro dipeptidase"/>
    <property type="match status" value="1"/>
</dbReference>
<dbReference type="Gene3D" id="3.90.230.10">
    <property type="entry name" value="Creatinase/methionine aminopeptidase superfamily"/>
    <property type="match status" value="1"/>
</dbReference>
<dbReference type="Gene3D" id="3.40.350.10">
    <property type="entry name" value="Creatinase/prolidase N-terminal domain"/>
    <property type="match status" value="1"/>
</dbReference>
<dbReference type="HAMAP" id="MF_01279">
    <property type="entry name" value="X_Pro_dipeptid"/>
    <property type="match status" value="1"/>
</dbReference>
<dbReference type="InterPro" id="IPR029149">
    <property type="entry name" value="Creatin/AminoP/Spt16_N"/>
</dbReference>
<dbReference type="InterPro" id="IPR036005">
    <property type="entry name" value="Creatinase/aminopeptidase-like"/>
</dbReference>
<dbReference type="InterPro" id="IPR048819">
    <property type="entry name" value="PepQ_N"/>
</dbReference>
<dbReference type="InterPro" id="IPR000994">
    <property type="entry name" value="Pept_M24"/>
</dbReference>
<dbReference type="InterPro" id="IPR001131">
    <property type="entry name" value="Peptidase_M24B_aminopep-P_CS"/>
</dbReference>
<dbReference type="InterPro" id="IPR052433">
    <property type="entry name" value="X-Pro_dipept-like"/>
</dbReference>
<dbReference type="InterPro" id="IPR022846">
    <property type="entry name" value="X_Pro_dipept"/>
</dbReference>
<dbReference type="NCBIfam" id="NF010133">
    <property type="entry name" value="PRK13607.1"/>
    <property type="match status" value="1"/>
</dbReference>
<dbReference type="PANTHER" id="PTHR43226">
    <property type="entry name" value="XAA-PRO AMINOPEPTIDASE 3"/>
    <property type="match status" value="1"/>
</dbReference>
<dbReference type="PANTHER" id="PTHR43226:SF8">
    <property type="entry name" value="XAA-PRO DIPEPTIDASE"/>
    <property type="match status" value="1"/>
</dbReference>
<dbReference type="Pfam" id="PF21216">
    <property type="entry name" value="PepQ_N"/>
    <property type="match status" value="1"/>
</dbReference>
<dbReference type="Pfam" id="PF00557">
    <property type="entry name" value="Peptidase_M24"/>
    <property type="match status" value="1"/>
</dbReference>
<dbReference type="SUPFAM" id="SSF55920">
    <property type="entry name" value="Creatinase/aminopeptidase"/>
    <property type="match status" value="1"/>
</dbReference>
<dbReference type="PROSITE" id="PS00491">
    <property type="entry name" value="PROLINE_PEPTIDASE"/>
    <property type="match status" value="1"/>
</dbReference>
<proteinExistence type="evidence at protein level"/>
<accession>P21165</accession>
<accession>P21176</accession>
<accession>Q2M8F0</accession>
<name>PEPQ_ECOLI</name>